<keyword id="KW-0049">Antioxidant</keyword>
<keyword id="KW-0186">Copper</keyword>
<keyword id="KW-1015">Disulfide bond</keyword>
<keyword id="KW-0479">Metal-binding</keyword>
<keyword id="KW-0560">Oxidoreductase</keyword>
<keyword id="KW-0574">Periplasm</keyword>
<keyword id="KW-0732">Signal</keyword>
<keyword id="KW-0862">Zinc</keyword>
<gene>
    <name type="primary">sodC</name>
</gene>
<dbReference type="EC" id="1.15.1.1"/>
<dbReference type="EMBL" id="S82042">
    <property type="protein sequence ID" value="AAB36467.1"/>
    <property type="molecule type" value="Genomic_DNA"/>
</dbReference>
<dbReference type="RefSeq" id="WP_010948054.1">
    <property type="nucleotide sequence ID" value="NZ_UGOV01000002.1"/>
</dbReference>
<dbReference type="SMR" id="P69049"/>
<dbReference type="STRING" id="91892.BIZ52_11210"/>
<dbReference type="GeneID" id="57036341"/>
<dbReference type="eggNOG" id="COG2032">
    <property type="taxonomic scope" value="Bacteria"/>
</dbReference>
<dbReference type="GO" id="GO:0042597">
    <property type="term" value="C:periplasmic space"/>
    <property type="evidence" value="ECO:0007669"/>
    <property type="project" value="UniProtKB-SubCell"/>
</dbReference>
<dbReference type="GO" id="GO:0005507">
    <property type="term" value="F:copper ion binding"/>
    <property type="evidence" value="ECO:0007669"/>
    <property type="project" value="InterPro"/>
</dbReference>
<dbReference type="GO" id="GO:0004784">
    <property type="term" value="F:superoxide dismutase activity"/>
    <property type="evidence" value="ECO:0007669"/>
    <property type="project" value="UniProtKB-EC"/>
</dbReference>
<dbReference type="CDD" id="cd00305">
    <property type="entry name" value="Cu-Zn_Superoxide_Dismutase"/>
    <property type="match status" value="1"/>
</dbReference>
<dbReference type="Gene3D" id="2.60.40.200">
    <property type="entry name" value="Superoxide dismutase, copper/zinc binding domain"/>
    <property type="match status" value="1"/>
</dbReference>
<dbReference type="InterPro" id="IPR036423">
    <property type="entry name" value="SOD-like_Cu/Zn_dom_sf"/>
</dbReference>
<dbReference type="InterPro" id="IPR024134">
    <property type="entry name" value="SOD_Cu/Zn_/chaperone"/>
</dbReference>
<dbReference type="InterPro" id="IPR018152">
    <property type="entry name" value="SOD_Cu/Zn_BS"/>
</dbReference>
<dbReference type="InterPro" id="IPR001424">
    <property type="entry name" value="SOD_Cu_Zn_dom"/>
</dbReference>
<dbReference type="PANTHER" id="PTHR10003">
    <property type="entry name" value="SUPEROXIDE DISMUTASE CU-ZN -RELATED"/>
    <property type="match status" value="1"/>
</dbReference>
<dbReference type="Pfam" id="PF00080">
    <property type="entry name" value="Sod_Cu"/>
    <property type="match status" value="1"/>
</dbReference>
<dbReference type="SUPFAM" id="SSF49329">
    <property type="entry name" value="Cu,Zn superoxide dismutase-like"/>
    <property type="match status" value="1"/>
</dbReference>
<dbReference type="PROSITE" id="PS00332">
    <property type="entry name" value="SOD_CU_ZN_2"/>
    <property type="match status" value="1"/>
</dbReference>
<name>SODC_LEGPN</name>
<evidence type="ECO:0000250" key="1"/>
<evidence type="ECO:0000255" key="2"/>
<evidence type="ECO:0000305" key="3"/>
<proteinExistence type="inferred from homology"/>
<comment type="function">
    <text>Destroys radicals which are normally produced within the cells and which are toxic to biological systems.</text>
</comment>
<comment type="catalytic activity">
    <reaction>
        <text>2 superoxide + 2 H(+) = H2O2 + O2</text>
        <dbReference type="Rhea" id="RHEA:20696"/>
        <dbReference type="ChEBI" id="CHEBI:15378"/>
        <dbReference type="ChEBI" id="CHEBI:15379"/>
        <dbReference type="ChEBI" id="CHEBI:16240"/>
        <dbReference type="ChEBI" id="CHEBI:18421"/>
        <dbReference type="EC" id="1.15.1.1"/>
    </reaction>
</comment>
<comment type="cofactor">
    <cofactor evidence="1">
        <name>Cu cation</name>
        <dbReference type="ChEBI" id="CHEBI:23378"/>
    </cofactor>
    <text evidence="1">Binds 1 copper ion per subunit.</text>
</comment>
<comment type="cofactor">
    <cofactor evidence="1">
        <name>Zn(2+)</name>
        <dbReference type="ChEBI" id="CHEBI:29105"/>
    </cofactor>
    <text evidence="1">Binds 1 zinc ion per subunit.</text>
</comment>
<comment type="subunit">
    <text evidence="1">Homodimer.</text>
</comment>
<comment type="subcellular location">
    <subcellularLocation>
        <location evidence="1">Periplasm</location>
    </subcellularLocation>
</comment>
<comment type="similarity">
    <text evidence="3">Belongs to the Cu-Zn superoxide dismutase family.</text>
</comment>
<protein>
    <recommendedName>
        <fullName>Superoxide dismutase [Cu-Zn]</fullName>
        <ecNumber>1.15.1.1</ecNumber>
    </recommendedName>
</protein>
<sequence length="162" mass="17076">MNKSGIILIGTILFSSMAIADDLTAPIYTTGPKPVAIGKVTFTQTPYGVLITPDLTNLPEGPHGFHLHKTADCGNHGMHAEGHYDPQNTNSHQGPYGNGHLGDLPVLYVTSNGKAMIPTLAPRLKLSDMHNLAVMIHANGDTYSDNPPQGGGGDRIACGVIK</sequence>
<feature type="signal peptide" evidence="2">
    <location>
        <begin position="1"/>
        <end position="20"/>
    </location>
</feature>
<feature type="chain" id="PRO_0000032831" description="Superoxide dismutase [Cu-Zn]">
    <location>
        <begin position="21"/>
        <end position="162"/>
    </location>
</feature>
<feature type="binding site" evidence="1">
    <location>
        <position position="66"/>
    </location>
    <ligand>
        <name>Cu cation</name>
        <dbReference type="ChEBI" id="CHEBI:23378"/>
        <note>catalytic</note>
    </ligand>
</feature>
<feature type="binding site" evidence="1">
    <location>
        <position position="68"/>
    </location>
    <ligand>
        <name>Cu cation</name>
        <dbReference type="ChEBI" id="CHEBI:23378"/>
        <note>catalytic</note>
    </ligand>
</feature>
<feature type="binding site" evidence="1">
    <location>
        <position position="83"/>
    </location>
    <ligand>
        <name>Cu cation</name>
        <dbReference type="ChEBI" id="CHEBI:23378"/>
        <note>catalytic</note>
    </ligand>
</feature>
<feature type="binding site" evidence="1">
    <location>
        <position position="83"/>
    </location>
    <ligand>
        <name>Zn(2+)</name>
        <dbReference type="ChEBI" id="CHEBI:29105"/>
        <note>structural</note>
    </ligand>
</feature>
<feature type="binding site" evidence="1">
    <location>
        <position position="92"/>
    </location>
    <ligand>
        <name>Zn(2+)</name>
        <dbReference type="ChEBI" id="CHEBI:29105"/>
        <note>structural</note>
    </ligand>
</feature>
<feature type="binding site" evidence="1">
    <location>
        <position position="100"/>
    </location>
    <ligand>
        <name>Zn(2+)</name>
        <dbReference type="ChEBI" id="CHEBI:29105"/>
        <note>structural</note>
    </ligand>
</feature>
<feature type="binding site" evidence="1">
    <location>
        <position position="103"/>
    </location>
    <ligand>
        <name>Zn(2+)</name>
        <dbReference type="ChEBI" id="CHEBI:29105"/>
        <note>structural</note>
    </ligand>
</feature>
<feature type="binding site" evidence="1">
    <location>
        <position position="137"/>
    </location>
    <ligand>
        <name>Cu cation</name>
        <dbReference type="ChEBI" id="CHEBI:23378"/>
        <note>catalytic</note>
    </ligand>
</feature>
<feature type="disulfide bond" evidence="1">
    <location>
        <begin position="73"/>
        <end position="158"/>
    </location>
</feature>
<accession>P69049</accession>
<accession>P53637</accession>
<organism>
    <name type="scientific">Legionella pneumophila</name>
    <dbReference type="NCBI Taxonomy" id="446"/>
    <lineage>
        <taxon>Bacteria</taxon>
        <taxon>Pseudomonadati</taxon>
        <taxon>Pseudomonadota</taxon>
        <taxon>Gammaproteobacteria</taxon>
        <taxon>Legionellales</taxon>
        <taxon>Legionellaceae</taxon>
        <taxon>Legionella</taxon>
    </lineage>
</organism>
<reference key="1">
    <citation type="journal article" date="1996" name="J. Bacteriol.">
        <title>Periplasmic copper-zinc superoxide dismutase of Legionella pneumophila: role in stationary-phase survival.</title>
        <authorList>
            <person name="St John G."/>
            <person name="Steinman H.M."/>
        </authorList>
    </citation>
    <scope>NUCLEOTIDE SEQUENCE [GENOMIC DNA]</scope>
    <source>
        <strain>JR32</strain>
    </source>
</reference>